<name>RNPH_SHIBS</name>
<feature type="chain" id="PRO_1000024889" description="Ribonuclease PH">
    <location>
        <begin position="1"/>
        <end position="238"/>
    </location>
</feature>
<feature type="binding site" evidence="1">
    <location>
        <position position="86"/>
    </location>
    <ligand>
        <name>phosphate</name>
        <dbReference type="ChEBI" id="CHEBI:43474"/>
        <note>substrate</note>
    </ligand>
</feature>
<feature type="binding site" evidence="1">
    <location>
        <begin position="124"/>
        <end position="126"/>
    </location>
    <ligand>
        <name>phosphate</name>
        <dbReference type="ChEBI" id="CHEBI:43474"/>
        <note>substrate</note>
    </ligand>
</feature>
<sequence>MRPAGRSNNQVRPVTLTRNYTKHAEGSVLVEFGDTKVLCTASIEEGVPRFLKGQGQGWITAEYGMLPRSTHTRNAREAAKGKQGGRTMEIQRLIARALRAAVDLKALGEFTITLDCDVLQADGGTRTASITGACVALADALQKLVENGKLKTNPMKGMVAAVSVGIVNGEAVCDLEYVEDSAAETDMNVVMTEDGRIIEVQGTAEGEPFTHEELLTLLALARGGIESIVATQKAALAN</sequence>
<organism>
    <name type="scientific">Shigella boydii serotype 4 (strain Sb227)</name>
    <dbReference type="NCBI Taxonomy" id="300268"/>
    <lineage>
        <taxon>Bacteria</taxon>
        <taxon>Pseudomonadati</taxon>
        <taxon>Pseudomonadota</taxon>
        <taxon>Gammaproteobacteria</taxon>
        <taxon>Enterobacterales</taxon>
        <taxon>Enterobacteriaceae</taxon>
        <taxon>Shigella</taxon>
    </lineage>
</organism>
<keyword id="KW-0548">Nucleotidyltransferase</keyword>
<keyword id="KW-0694">RNA-binding</keyword>
<keyword id="KW-0698">rRNA processing</keyword>
<keyword id="KW-0808">Transferase</keyword>
<keyword id="KW-0819">tRNA processing</keyword>
<keyword id="KW-0820">tRNA-binding</keyword>
<evidence type="ECO:0000255" key="1">
    <source>
        <dbReference type="HAMAP-Rule" id="MF_00564"/>
    </source>
</evidence>
<comment type="function">
    <text evidence="1">Phosphorolytic 3'-5' exoribonuclease that plays an important role in tRNA 3'-end maturation. Removes nucleotide residues following the 3'-CCA terminus of tRNAs; can also add nucleotides to the ends of RNA molecules by using nucleoside diphosphates as substrates, but this may not be physiologically important. Probably plays a role in initiation of 16S rRNA degradation (leading to ribosome degradation) during starvation.</text>
</comment>
<comment type="catalytic activity">
    <reaction evidence="1">
        <text>tRNA(n+1) + phosphate = tRNA(n) + a ribonucleoside 5'-diphosphate</text>
        <dbReference type="Rhea" id="RHEA:10628"/>
        <dbReference type="Rhea" id="RHEA-COMP:17343"/>
        <dbReference type="Rhea" id="RHEA-COMP:17344"/>
        <dbReference type="ChEBI" id="CHEBI:43474"/>
        <dbReference type="ChEBI" id="CHEBI:57930"/>
        <dbReference type="ChEBI" id="CHEBI:173114"/>
        <dbReference type="EC" id="2.7.7.56"/>
    </reaction>
</comment>
<comment type="subunit">
    <text evidence="1">Homohexameric ring arranged as a trimer of dimers.</text>
</comment>
<comment type="similarity">
    <text evidence="1">Belongs to the RNase PH family.</text>
</comment>
<gene>
    <name evidence="1" type="primary">rph</name>
    <name type="ordered locus">SBO_3645</name>
</gene>
<reference key="1">
    <citation type="journal article" date="2005" name="Nucleic Acids Res.">
        <title>Genome dynamics and diversity of Shigella species, the etiologic agents of bacillary dysentery.</title>
        <authorList>
            <person name="Yang F."/>
            <person name="Yang J."/>
            <person name="Zhang X."/>
            <person name="Chen L."/>
            <person name="Jiang Y."/>
            <person name="Yan Y."/>
            <person name="Tang X."/>
            <person name="Wang J."/>
            <person name="Xiong Z."/>
            <person name="Dong J."/>
            <person name="Xue Y."/>
            <person name="Zhu Y."/>
            <person name="Xu X."/>
            <person name="Sun L."/>
            <person name="Chen S."/>
            <person name="Nie H."/>
            <person name="Peng J."/>
            <person name="Xu J."/>
            <person name="Wang Y."/>
            <person name="Yuan Z."/>
            <person name="Wen Y."/>
            <person name="Yao Z."/>
            <person name="Shen Y."/>
            <person name="Qiang B."/>
            <person name="Hou Y."/>
            <person name="Yu J."/>
            <person name="Jin Q."/>
        </authorList>
    </citation>
    <scope>NUCLEOTIDE SEQUENCE [LARGE SCALE GENOMIC DNA]</scope>
    <source>
        <strain>Sb227</strain>
    </source>
</reference>
<proteinExistence type="inferred from homology"/>
<accession>Q31UY3</accession>
<protein>
    <recommendedName>
        <fullName evidence="1">Ribonuclease PH</fullName>
        <shortName evidence="1">RNase PH</shortName>
        <ecNumber evidence="1">2.7.7.56</ecNumber>
    </recommendedName>
    <alternativeName>
        <fullName evidence="1">tRNA nucleotidyltransferase</fullName>
    </alternativeName>
</protein>
<dbReference type="EC" id="2.7.7.56" evidence="1"/>
<dbReference type="EMBL" id="CP000036">
    <property type="protein sequence ID" value="ABB68125.1"/>
    <property type="molecule type" value="Genomic_DNA"/>
</dbReference>
<dbReference type="RefSeq" id="WP_001247093.1">
    <property type="nucleotide sequence ID" value="NC_007613.1"/>
</dbReference>
<dbReference type="SMR" id="Q31UY3"/>
<dbReference type="GeneID" id="93778358"/>
<dbReference type="KEGG" id="sbo:SBO_3645"/>
<dbReference type="HOGENOM" id="CLU_050858_0_0_6"/>
<dbReference type="Proteomes" id="UP000007067">
    <property type="component" value="Chromosome"/>
</dbReference>
<dbReference type="GO" id="GO:0000175">
    <property type="term" value="F:3'-5'-RNA exonuclease activity"/>
    <property type="evidence" value="ECO:0007669"/>
    <property type="project" value="UniProtKB-UniRule"/>
</dbReference>
<dbReference type="GO" id="GO:0000049">
    <property type="term" value="F:tRNA binding"/>
    <property type="evidence" value="ECO:0007669"/>
    <property type="project" value="UniProtKB-UniRule"/>
</dbReference>
<dbReference type="GO" id="GO:0009022">
    <property type="term" value="F:tRNA nucleotidyltransferase activity"/>
    <property type="evidence" value="ECO:0007669"/>
    <property type="project" value="UniProtKB-UniRule"/>
</dbReference>
<dbReference type="GO" id="GO:0016075">
    <property type="term" value="P:rRNA catabolic process"/>
    <property type="evidence" value="ECO:0007669"/>
    <property type="project" value="UniProtKB-UniRule"/>
</dbReference>
<dbReference type="GO" id="GO:0006364">
    <property type="term" value="P:rRNA processing"/>
    <property type="evidence" value="ECO:0007669"/>
    <property type="project" value="UniProtKB-KW"/>
</dbReference>
<dbReference type="GO" id="GO:0008033">
    <property type="term" value="P:tRNA processing"/>
    <property type="evidence" value="ECO:0007669"/>
    <property type="project" value="UniProtKB-UniRule"/>
</dbReference>
<dbReference type="CDD" id="cd11362">
    <property type="entry name" value="RNase_PH_bact"/>
    <property type="match status" value="1"/>
</dbReference>
<dbReference type="FunFam" id="3.30.230.70:FF:000003">
    <property type="entry name" value="Ribonuclease PH"/>
    <property type="match status" value="1"/>
</dbReference>
<dbReference type="Gene3D" id="3.30.230.70">
    <property type="entry name" value="GHMP Kinase, N-terminal domain"/>
    <property type="match status" value="1"/>
</dbReference>
<dbReference type="HAMAP" id="MF_00564">
    <property type="entry name" value="RNase_PH"/>
    <property type="match status" value="1"/>
</dbReference>
<dbReference type="InterPro" id="IPR001247">
    <property type="entry name" value="ExoRNase_PH_dom1"/>
</dbReference>
<dbReference type="InterPro" id="IPR015847">
    <property type="entry name" value="ExoRNase_PH_dom2"/>
</dbReference>
<dbReference type="InterPro" id="IPR036345">
    <property type="entry name" value="ExoRNase_PH_dom2_sf"/>
</dbReference>
<dbReference type="InterPro" id="IPR027408">
    <property type="entry name" value="PNPase/RNase_PH_dom_sf"/>
</dbReference>
<dbReference type="InterPro" id="IPR020568">
    <property type="entry name" value="Ribosomal_Su5_D2-typ_SF"/>
</dbReference>
<dbReference type="InterPro" id="IPR050080">
    <property type="entry name" value="RNase_PH"/>
</dbReference>
<dbReference type="InterPro" id="IPR002381">
    <property type="entry name" value="RNase_PH_bac-type"/>
</dbReference>
<dbReference type="InterPro" id="IPR018336">
    <property type="entry name" value="RNase_PH_CS"/>
</dbReference>
<dbReference type="NCBIfam" id="TIGR01966">
    <property type="entry name" value="RNasePH"/>
    <property type="match status" value="1"/>
</dbReference>
<dbReference type="PANTHER" id="PTHR11953">
    <property type="entry name" value="EXOSOME COMPLEX COMPONENT"/>
    <property type="match status" value="1"/>
</dbReference>
<dbReference type="PANTHER" id="PTHR11953:SF0">
    <property type="entry name" value="EXOSOME COMPLEX COMPONENT RRP41"/>
    <property type="match status" value="1"/>
</dbReference>
<dbReference type="Pfam" id="PF01138">
    <property type="entry name" value="RNase_PH"/>
    <property type="match status" value="1"/>
</dbReference>
<dbReference type="Pfam" id="PF03725">
    <property type="entry name" value="RNase_PH_C"/>
    <property type="match status" value="1"/>
</dbReference>
<dbReference type="SUPFAM" id="SSF55666">
    <property type="entry name" value="Ribonuclease PH domain 2-like"/>
    <property type="match status" value="1"/>
</dbReference>
<dbReference type="SUPFAM" id="SSF54211">
    <property type="entry name" value="Ribosomal protein S5 domain 2-like"/>
    <property type="match status" value="1"/>
</dbReference>
<dbReference type="PROSITE" id="PS01277">
    <property type="entry name" value="RIBONUCLEASE_PH"/>
    <property type="match status" value="1"/>
</dbReference>